<protein>
    <recommendedName>
        <fullName evidence="1">Putative pre-16S rRNA nuclease</fullName>
        <ecNumber evidence="1">3.1.-.-</ecNumber>
    </recommendedName>
</protein>
<sequence>MVWLGVDLGNARVGLALSDPELTFAHPAGNIHVAGDYFFAIDEVLNVIEDEHVDHVIVGLPLQMDGTEGKSAKKARRWAANLEKRLQAESEDSDSTEYQIPQVSLIDERLTTVSAHRQLFEAHKASNKHRPVVDQQSAVVILQTALDRTREQ</sequence>
<comment type="function">
    <text evidence="1">Could be a nuclease involved in processing of the 5'-end of pre-16S rRNA.</text>
</comment>
<comment type="subcellular location">
    <subcellularLocation>
        <location evidence="1">Cytoplasm</location>
    </subcellularLocation>
</comment>
<comment type="similarity">
    <text evidence="1">Belongs to the YqgF nuclease family.</text>
</comment>
<reference key="1">
    <citation type="journal article" date="2008" name="BMC Genomics">
        <title>Comparative genomic analysis of the gut bacterium Bifidobacterium longum reveals loci susceptible to deletion during pure culture growth.</title>
        <authorList>
            <person name="Lee J.H."/>
            <person name="Karamychev V.N."/>
            <person name="Kozyavkin S.A."/>
            <person name="Mills D."/>
            <person name="Pavlov A.R."/>
            <person name="Pavlova N.V."/>
            <person name="Polouchine N.N."/>
            <person name="Richardson P.M."/>
            <person name="Shakhova V.V."/>
            <person name="Slesarev A.I."/>
            <person name="Weimer B."/>
            <person name="O'Sullivan D.J."/>
        </authorList>
    </citation>
    <scope>NUCLEOTIDE SEQUENCE [LARGE SCALE GENOMIC DNA]</scope>
    <source>
        <strain>DJO10A</strain>
    </source>
</reference>
<evidence type="ECO:0000255" key="1">
    <source>
        <dbReference type="HAMAP-Rule" id="MF_00651"/>
    </source>
</evidence>
<dbReference type="EC" id="3.1.-.-" evidence="1"/>
<dbReference type="EMBL" id="CP000605">
    <property type="protein sequence ID" value="ACD98061.1"/>
    <property type="molecule type" value="Genomic_DNA"/>
</dbReference>
<dbReference type="SMR" id="B3DSE2"/>
<dbReference type="KEGG" id="blj:BLD_0615"/>
<dbReference type="HOGENOM" id="CLU_098240_0_0_11"/>
<dbReference type="Proteomes" id="UP000002419">
    <property type="component" value="Chromosome"/>
</dbReference>
<dbReference type="GO" id="GO:0005829">
    <property type="term" value="C:cytosol"/>
    <property type="evidence" value="ECO:0007669"/>
    <property type="project" value="TreeGrafter"/>
</dbReference>
<dbReference type="GO" id="GO:0004518">
    <property type="term" value="F:nuclease activity"/>
    <property type="evidence" value="ECO:0007669"/>
    <property type="project" value="UniProtKB-KW"/>
</dbReference>
<dbReference type="GO" id="GO:0000967">
    <property type="term" value="P:rRNA 5'-end processing"/>
    <property type="evidence" value="ECO:0007669"/>
    <property type="project" value="UniProtKB-UniRule"/>
</dbReference>
<dbReference type="CDD" id="cd16964">
    <property type="entry name" value="YqgF"/>
    <property type="match status" value="1"/>
</dbReference>
<dbReference type="Gene3D" id="3.30.420.140">
    <property type="entry name" value="YqgF/RNase H-like domain"/>
    <property type="match status" value="1"/>
</dbReference>
<dbReference type="HAMAP" id="MF_00651">
    <property type="entry name" value="Nuclease_YqgF"/>
    <property type="match status" value="1"/>
</dbReference>
<dbReference type="InterPro" id="IPR012337">
    <property type="entry name" value="RNaseH-like_sf"/>
</dbReference>
<dbReference type="InterPro" id="IPR005227">
    <property type="entry name" value="YqgF"/>
</dbReference>
<dbReference type="InterPro" id="IPR006641">
    <property type="entry name" value="YqgF/RNaseH-like_dom"/>
</dbReference>
<dbReference type="InterPro" id="IPR037027">
    <property type="entry name" value="YqgF/RNaseH-like_dom_sf"/>
</dbReference>
<dbReference type="NCBIfam" id="TIGR00250">
    <property type="entry name" value="RNAse_H_YqgF"/>
    <property type="match status" value="1"/>
</dbReference>
<dbReference type="PANTHER" id="PTHR33317">
    <property type="entry name" value="POLYNUCLEOTIDYL TRANSFERASE, RIBONUCLEASE H-LIKE SUPERFAMILY PROTEIN"/>
    <property type="match status" value="1"/>
</dbReference>
<dbReference type="PANTHER" id="PTHR33317:SF4">
    <property type="entry name" value="POLYNUCLEOTIDYL TRANSFERASE, RIBONUCLEASE H-LIKE SUPERFAMILY PROTEIN"/>
    <property type="match status" value="1"/>
</dbReference>
<dbReference type="Pfam" id="PF03652">
    <property type="entry name" value="RuvX"/>
    <property type="match status" value="1"/>
</dbReference>
<dbReference type="SMART" id="SM00732">
    <property type="entry name" value="YqgFc"/>
    <property type="match status" value="1"/>
</dbReference>
<dbReference type="SUPFAM" id="SSF53098">
    <property type="entry name" value="Ribonuclease H-like"/>
    <property type="match status" value="1"/>
</dbReference>
<accession>B3DSE2</accession>
<organism>
    <name type="scientific">Bifidobacterium longum (strain DJO10A)</name>
    <dbReference type="NCBI Taxonomy" id="205913"/>
    <lineage>
        <taxon>Bacteria</taxon>
        <taxon>Bacillati</taxon>
        <taxon>Actinomycetota</taxon>
        <taxon>Actinomycetes</taxon>
        <taxon>Bifidobacteriales</taxon>
        <taxon>Bifidobacteriaceae</taxon>
        <taxon>Bifidobacterium</taxon>
    </lineage>
</organism>
<proteinExistence type="inferred from homology"/>
<gene>
    <name type="ordered locus">BLD_0615</name>
</gene>
<name>YQGF_BIFLD</name>
<keyword id="KW-0963">Cytoplasm</keyword>
<keyword id="KW-0378">Hydrolase</keyword>
<keyword id="KW-0540">Nuclease</keyword>
<keyword id="KW-0690">Ribosome biogenesis</keyword>
<feature type="chain" id="PRO_1000131001" description="Putative pre-16S rRNA nuclease">
    <location>
        <begin position="1"/>
        <end position="152"/>
    </location>
</feature>